<feature type="chain" id="PRO_0000242536" description="Protein Ycf2">
    <location>
        <begin position="1"/>
        <end position="2290"/>
    </location>
</feature>
<feature type="binding site" evidence="1">
    <location>
        <begin position="1638"/>
        <end position="1645"/>
    </location>
    <ligand>
        <name>ATP</name>
        <dbReference type="ChEBI" id="CHEBI:30616"/>
    </ligand>
</feature>
<organism>
    <name type="scientific">Phalaenopsis aphrodite subsp. formosana</name>
    <name type="common">Moth orchid</name>
    <dbReference type="NCBI Taxonomy" id="308872"/>
    <lineage>
        <taxon>Eukaryota</taxon>
        <taxon>Viridiplantae</taxon>
        <taxon>Streptophyta</taxon>
        <taxon>Embryophyta</taxon>
        <taxon>Tracheophyta</taxon>
        <taxon>Spermatophyta</taxon>
        <taxon>Magnoliopsida</taxon>
        <taxon>Liliopsida</taxon>
        <taxon>Asparagales</taxon>
        <taxon>Orchidaceae</taxon>
        <taxon>Epidendroideae</taxon>
        <taxon>Vandeae</taxon>
        <taxon>Aeridinae</taxon>
        <taxon>Phalaenopsis</taxon>
    </lineage>
</organism>
<reference key="1">
    <citation type="journal article" date="2006" name="Mol. Biol. Evol.">
        <title>The chloroplast genome of Phalaenopsis aphrodite (Orchidaceae): comparative analysis of evolutionary rate with that of grasses and its phylogenetic implications.</title>
        <authorList>
            <person name="Chang C.-C."/>
            <person name="Lin H.-C."/>
            <person name="Lin I.-P."/>
            <person name="Chow T.-Y."/>
            <person name="Chen H.-H."/>
            <person name="Chen W.-H."/>
            <person name="Cheng C.-H."/>
            <person name="Lin C.-Y."/>
            <person name="Liu S.-M."/>
            <person name="Chang C.-C."/>
            <person name="Chaw S.-M."/>
        </authorList>
    </citation>
    <scope>NUCLEOTIDE SEQUENCE [LARGE SCALE GENOMIC DNA]</scope>
    <source>
        <strain>cv. Taisugar TS-97</strain>
    </source>
</reference>
<protein>
    <recommendedName>
        <fullName evidence="1">Protein Ycf2</fullName>
    </recommendedName>
</protein>
<gene>
    <name evidence="1" type="primary">ycf2-A</name>
</gene>
<gene>
    <name evidence="1" type="primary">ycf2-B</name>
</gene>
<evidence type="ECO:0000255" key="1">
    <source>
        <dbReference type="HAMAP-Rule" id="MF_01330"/>
    </source>
</evidence>
<geneLocation type="chloroplast"/>
<dbReference type="EMBL" id="AY916449">
    <property type="protein sequence ID" value="AAW82543.1"/>
    <property type="molecule type" value="Genomic_DNA"/>
</dbReference>
<dbReference type="EMBL" id="AY916449">
    <property type="protein sequence ID" value="AAW82550.1"/>
    <property type="molecule type" value="Genomic_DNA"/>
</dbReference>
<dbReference type="GO" id="GO:0009570">
    <property type="term" value="C:chloroplast stroma"/>
    <property type="evidence" value="ECO:0007669"/>
    <property type="project" value="UniProtKB-SubCell"/>
</dbReference>
<dbReference type="GO" id="GO:0005524">
    <property type="term" value="F:ATP binding"/>
    <property type="evidence" value="ECO:0007669"/>
    <property type="project" value="UniProtKB-KW"/>
</dbReference>
<dbReference type="GO" id="GO:0016887">
    <property type="term" value="F:ATP hydrolysis activity"/>
    <property type="evidence" value="ECO:0007669"/>
    <property type="project" value="InterPro"/>
</dbReference>
<dbReference type="CDD" id="cd19505">
    <property type="entry name" value="RecA-like_Ycf2"/>
    <property type="match status" value="1"/>
</dbReference>
<dbReference type="Gene3D" id="3.40.50.300">
    <property type="entry name" value="P-loop containing nucleotide triphosphate hydrolases"/>
    <property type="match status" value="1"/>
</dbReference>
<dbReference type="HAMAP" id="MF_01330">
    <property type="entry name" value="Ycf2"/>
    <property type="match status" value="1"/>
</dbReference>
<dbReference type="InterPro" id="IPR003959">
    <property type="entry name" value="ATPase_AAA_core"/>
</dbReference>
<dbReference type="InterPro" id="IPR027417">
    <property type="entry name" value="P-loop_NTPase"/>
</dbReference>
<dbReference type="InterPro" id="IPR008543">
    <property type="entry name" value="Uncharacterised_Ycf2"/>
</dbReference>
<dbReference type="InterPro" id="IPR056777">
    <property type="entry name" value="Ycf2_N"/>
</dbReference>
<dbReference type="PANTHER" id="PTHR33078:SF51">
    <property type="entry name" value="PROTEIN TIC 214"/>
    <property type="match status" value="1"/>
</dbReference>
<dbReference type="PANTHER" id="PTHR33078">
    <property type="entry name" value="PROTEIN YCF2-RELATED"/>
    <property type="match status" value="1"/>
</dbReference>
<dbReference type="Pfam" id="PF00004">
    <property type="entry name" value="AAA"/>
    <property type="match status" value="1"/>
</dbReference>
<dbReference type="Pfam" id="PF05695">
    <property type="entry name" value="Ycf2"/>
    <property type="match status" value="1"/>
</dbReference>
<dbReference type="SUPFAM" id="SSF52540">
    <property type="entry name" value="P-loop containing nucleoside triphosphate hydrolases"/>
    <property type="match status" value="1"/>
</dbReference>
<keyword id="KW-0067">ATP-binding</keyword>
<keyword id="KW-0150">Chloroplast</keyword>
<keyword id="KW-0547">Nucleotide-binding</keyword>
<keyword id="KW-0934">Plastid</keyword>
<name>YCF2_PHAAO</name>
<sequence length="2290" mass="268389">MKRHQFKSWIFELREILREIKNSHYFLDSWIKFDSVGSFTHIFFHQERFMKLFDPRIWSILLSRDSQGATSNRYFTIKGLVLLVVVVLLSRINNRKMVERKNLYLMGLLPIPMNSIGPRKETLEESFWSSNRNRLIVSLLYLPKGKKISESCFMDPQESTWVIPIKKKRIMPESNRGSRWWRNRIGKKRDSSCQISNETIAGIEISFKEKDSKYLEFLFLSYTDDPIRKDHDWELFDRLSPRKKRNIINLNSGQLFEILGKDLICYLMSAFREKRPIQGESFFKQQGAGATMQSNDIEHVSHLFSRNKWGLSLQNCAQFHMWQFRQDLFVSWGKNQHESDFLRNVSRENWIWLDNVWLVNKDRFFSKVRNVLSNIQYDSTRSIFVQVTDSSQWKGSSSDQSRDHFDSVRNENSEYHTLIDQTEIQQLKERSILWDPSFLQTERTEIESDRFPKCLFGSSSMSWLFTEPEKRMNNHLLPEEIEEFLGNPTRSIRSFFSDRWSELHLGSNPTERSTRDHKLLKKKQDVSFVPSRRAEKKEMVDIFKIITYLQDTVSIHPSEPYHIPDLVPKDEPDMDSSNKISFLNKNPFFDFFHLFHDRNKGGYALRHDFFESEERFPEMADLFTLSITEPDLVFHRGFAFYIDSYGLDQKRFLNEVFNSRDESKKKLVLPPLFYEENESFSRRIRKKSVRIYCGNELEDPKLKTAVFASNNIMEAVNQYRLIRNLQYYGYIRNVSNRFFLMNRSDRNFEYGIQRDQIGNDTLNHITIMKYTINQHLSNLKKSQKKWFDPLISRTERSMNQDPDAYRYKGSDGSKNFQEHLEHFVSEQKNPFQVVQVVFDQLRIHQYSIDWSEVIDKEDLSKSLRFFLSKSLLFLSKSLRFFLSKSLPFFFVSIGNIPIHRSEIRIYELKGPNDQLCNQLLESIGVQIVHLKKLKPFLLDDHDTSQRPKFLINGGTILPFLFKKIPKRVIDSFHTRKNRRKSFDNTDSYFSMISHDRDNWLNPVKAFHRSSLISSFYKANRLRFLNDPHHFWFYCNKRFPFDVEKTRINNYDLTYGQFLNILSIRNKIFSLCVGKKGSLFLERETLSPIESQVSDIFIPNDFPQSGDETYNLYKLYKSFHFPIRSDPFVRGAIYSIADISATPLTEEQIVNLEKTYCQPLSDMNLSDSEGNNLHQYLSFNSNMGLIHTPCSEKYLPSGKRKKRSLCLKKCVEKGQMYRTFQRDSAFSNLSKWNLFQTYMPWFLTSTGCKYLNFTLLDTLSNPLPILSSSQKFVSIFHDMMHGSDISWPIPQKILPQWTLISEISSQCLQNLLLSEEMIHRNNESPVPLIWAHLRSTNAREFLYSIFFLLLVAGYLVRIHLLFVSRASSELQTELEKIKSLMIPSYMMEFRKLLDRYPTSELNPFWLKNLFLVVLEQLGDSLGEIRGSASGGNMLLGGGPAYGVKSIRSKKKYWKINLIDLVSIIPNPINRIIFSRNTRHLSRTSKEIYSLIRKRKNVNGDWIDDKIEFWVANSDSIDDEEREFLVQFSALTTEKRIDQILLSLTHSDHLSKNDSGYQMIEQPGSISLRYLVDIHQKDLMNYEFNRSCLAERRIFLAHYHTITYSQTLCGANIFHSPSPHGKPFSLRLALSPSRGILVIGSIGTGRSCLVKYLATNSYVPFITVFPNKFLDDKPKGYPIDDIDIDDSDDIDDSNDDLDIDKELLTMTNVLTMYMTTKIDRFDITLQFELAKAMSPCIIWIPNIHDLHVNESNYLSLDLLENYLSRDCERCSTGKILVIASTHIPQKVDPALIAPNKLNTCIKIRRLLLPQQLKHFFILSYTRGFHLEKKMFHTNGFGSITMGSNARDLVALINEALSISITQKKSIIETNTIRSALHRKTWDFRSQIRSVQDHGILFYQIGRAVTQNVLLSNCPIDPISIYMKKKSCKGGDSYLYKWYFELGTSMKKLTILLYLLSCSAGSVAQDLWSSSRHDEKNWITSYGFVENDSDLVHGLLLLLLLEVEGALALAGSSRTEKDCSQFDNNRVTLLLRSEPRNQLDMMQNGSCSIVDQRFLYEKYESEFEEGEGALDPQQIEEDLFNHIVWAPRIWRFDCIERPTELGFPYWTGSFRGKWIIYHKEGELQENDSEFLQSGTMQYQTRDRSSKEQGFFRTSQFIWDPADPSFSLFKDQPSVSVFSRREFFADEEMSKGLIASQTNPPTSIYKRWFIKNTQEKHFELLIHRQRWFRTNSSLSNGSFRSNTLSESYQYLSNLFLSNGTLLDQMTKTLLRKRWLFPDEMKHLIHVTGERFPIP</sequence>
<accession>Q3BAH3</accession>
<proteinExistence type="inferred from homology"/>
<comment type="function">
    <text>Probable ATPase of unknown function. Its presence in a non-photosynthetic plant (Epifagus virginiana) and experiments in tobacco indicate that it has an essential function which is probably not related to photosynthesis.</text>
</comment>
<comment type="subcellular location">
    <subcellularLocation>
        <location evidence="1">Plastid</location>
        <location evidence="1">Chloroplast stroma</location>
    </subcellularLocation>
</comment>
<comment type="similarity">
    <text evidence="1">Belongs to the Ycf2 family.</text>
</comment>